<gene>
    <name type="primary">nef</name>
</gene>
<sequence length="240" mass="27406">MGSAGSKKRSERQQGLREKLLRVPERPYGRLSGERREQSSRSPGESDKDLNSPSCEGQNARGAEGGGQQDADESDEDDEVGAICKTPIVPLRPMTYKLAVDMSHFIKEQGGLEGMYYSERRHRILDTYFENEEGIVSGWQNYTHGPGIRYPKYFGWLWKLVPVEVPAATREEEETHCLMHPAQISSWDDIHGETLIWQFDSLLAYDYVAFNRFPEEFGYQSGLPEEEWKARLKARGIPTD</sequence>
<organism>
    <name type="scientific">Human immunodeficiency virus type 2 subtype B (isolate D205)</name>
    <name type="common">HIV-2</name>
    <dbReference type="NCBI Taxonomy" id="11716"/>
    <lineage>
        <taxon>Viruses</taxon>
        <taxon>Riboviria</taxon>
        <taxon>Pararnavirae</taxon>
        <taxon>Artverviricota</taxon>
        <taxon>Revtraviricetes</taxon>
        <taxon>Ortervirales</taxon>
        <taxon>Retroviridae</taxon>
        <taxon>Orthoretrovirinae</taxon>
        <taxon>Lentivirus</taxon>
        <taxon>Human immunodeficiency virus 2</taxon>
    </lineage>
</organism>
<protein>
    <recommendedName>
        <fullName>Protein Nef</fullName>
    </recommendedName>
    <alternativeName>
        <fullName>3'ORF</fullName>
    </alternativeName>
    <alternativeName>
        <fullName>Negative factor</fullName>
        <shortName>F-protein</shortName>
    </alternativeName>
</protein>
<feature type="initiator methionine" description="Removed; by host" evidence="1">
    <location>
        <position position="1"/>
    </location>
</feature>
<feature type="chain" id="PRO_0000085232" description="Protein Nef">
    <location>
        <begin position="2"/>
        <end position="240"/>
    </location>
</feature>
<feature type="region of interest" description="Disordered" evidence="2">
    <location>
        <begin position="1"/>
        <end position="84"/>
    </location>
</feature>
<feature type="region of interest" description="Acidic">
    <location>
        <begin position="70"/>
        <end position="78"/>
    </location>
</feature>
<feature type="region of interest" description="Mediates dimerization" evidence="1">
    <location>
        <begin position="123"/>
        <end position="139"/>
    </location>
</feature>
<feature type="short sequence motif" description="PxxP">
    <location>
        <begin position="87"/>
        <end position="90"/>
    </location>
</feature>
<feature type="compositionally biased region" description="Basic residues" evidence="2">
    <location>
        <begin position="1"/>
        <end position="10"/>
    </location>
</feature>
<feature type="compositionally biased region" description="Basic and acidic residues" evidence="2">
    <location>
        <begin position="11"/>
        <end position="50"/>
    </location>
</feature>
<feature type="compositionally biased region" description="Acidic residues" evidence="2">
    <location>
        <begin position="70"/>
        <end position="80"/>
    </location>
</feature>
<feature type="lipid moiety-binding region" description="N-myristoyl glycine; by host" evidence="1">
    <location>
        <position position="2"/>
    </location>
</feature>
<feature type="sequence conflict" description="In Ref. 2." evidence="3" ref="2">
    <original>Y</original>
    <variation>H</variation>
    <location>
        <position position="150"/>
    </location>
</feature>
<proteinExistence type="inferred from homology"/>
<dbReference type="EMBL" id="X61240">
    <property type="protein sequence ID" value="CAA43573.1"/>
    <property type="molecule type" value="Genomic_DNA"/>
</dbReference>
<dbReference type="PIR" id="S08434">
    <property type="entry name" value="S08434"/>
</dbReference>
<dbReference type="PIR" id="S24572">
    <property type="entry name" value="S24572"/>
</dbReference>
<dbReference type="SMR" id="P15829"/>
<dbReference type="DIP" id="DIP-692N"/>
<dbReference type="Proteomes" id="UP000247120">
    <property type="component" value="Segment"/>
</dbReference>
<dbReference type="GO" id="GO:0020002">
    <property type="term" value="C:host cell plasma membrane"/>
    <property type="evidence" value="ECO:0007669"/>
    <property type="project" value="UniProtKB-SubCell"/>
</dbReference>
<dbReference type="GO" id="GO:0016020">
    <property type="term" value="C:membrane"/>
    <property type="evidence" value="ECO:0007669"/>
    <property type="project" value="UniProtKB-KW"/>
</dbReference>
<dbReference type="GO" id="GO:0005525">
    <property type="term" value="F:GTP binding"/>
    <property type="evidence" value="ECO:0007669"/>
    <property type="project" value="InterPro"/>
</dbReference>
<dbReference type="Gene3D" id="3.30.62.10">
    <property type="entry name" value="Nef Regulatory Factor"/>
    <property type="match status" value="1"/>
</dbReference>
<dbReference type="InterPro" id="IPR027481">
    <property type="entry name" value="HIV-1_Nef_core_sf"/>
</dbReference>
<dbReference type="InterPro" id="IPR001558">
    <property type="entry name" value="HIV_Nef"/>
</dbReference>
<dbReference type="Pfam" id="PF00469">
    <property type="entry name" value="F-protein"/>
    <property type="match status" value="1"/>
</dbReference>
<dbReference type="SUPFAM" id="SSF55671">
    <property type="entry name" value="Regulatory factor Nef"/>
    <property type="match status" value="1"/>
</dbReference>
<organismHost>
    <name type="scientific">Homo sapiens</name>
    <name type="common">Human</name>
    <dbReference type="NCBI Taxonomy" id="9606"/>
</organismHost>
<evidence type="ECO:0000250" key="1"/>
<evidence type="ECO:0000256" key="2">
    <source>
        <dbReference type="SAM" id="MobiDB-lite"/>
    </source>
</evidence>
<evidence type="ECO:0000305" key="3"/>
<comment type="function">
    <text evidence="1">Factor of infectivity and pathogenicity, required for optimal virus replication. Alters numerous pathways of T-lymphocyte function and down-regulates immunity surface molecules in order to evade host defense and increase viral infectivity. Alters the functionality of other immunity cells, like dendritic cells, monocytes/macrophages and NK cells. One of the earliest and most abundantly expressed viral proteins (By similarity).</text>
</comment>
<comment type="function">
    <text evidence="1">In infected CD4(+) T-lymphocytes, down-regulates cell surface expression of CD4, CD28, CD3, and MHC-I or MHC-II molecules.</text>
</comment>
<comment type="function">
    <text>Interferes with TCR signaling from the cell membrane. Interacts with CD247/TCRZ (TCR zeta chain) and exert potent down-regulation of cell surface TCR/CD3 complexes.</text>
</comment>
<comment type="function">
    <text evidence="1">Plays a role in optimizing the host cell environment for viral replication without causing cell death by apoptosis. Protects the infected cells from apoptosis in order to keep them alive until the next virus generation is ready to strike (By similarity).</text>
</comment>
<comment type="function">
    <text evidence="1">Extracellular Nef protein targets CD4(+) T-lymphocytes for apoptosis by interacting with CXCR4 surface receptors.</text>
</comment>
<comment type="subunit">
    <text evidence="1">Homodimer. Interacts with host CD247/TCRZ; this interaction induces down-regulation of cell surface TCR/CD3 complexes.</text>
</comment>
<comment type="subcellular location">
    <subcellularLocation>
        <location evidence="1">Host cell membrane</location>
        <topology evidence="1">Lipid-anchor</topology>
        <orientation evidence="1">Cytoplasmic side</orientation>
    </subcellularLocation>
    <text evidence="1">Associates with the inner plasma membrane through its N-terminal domain.</text>
</comment>
<comment type="domain">
    <text evidence="1">The N-terminal domain is composed of the N-myristoyl glycine and of a cluster of positively charged amino acids. It is required for inner plasma membrane targeting of Nef and virion incorporation, and thereby for infectivity (By similarity).</text>
</comment>
<comment type="similarity">
    <text evidence="3">Belongs to the lentivirus primate group Nef protein family.</text>
</comment>
<reference key="1">
    <citation type="submission" date="1992-04" db="EMBL/GenBank/DDBJ databases">
        <authorList>
            <person name="Dietrich U."/>
        </authorList>
    </citation>
    <scope>NUCLEOTIDE SEQUENCE [GENOMIC DNA]</scope>
</reference>
<reference key="2">
    <citation type="journal article" date="1989" name="Nature">
        <title>A highly divergent HIV-2-related isolate.</title>
        <authorList>
            <person name="Dietrich U."/>
            <person name="Adamski M."/>
            <person name="Kreutz R."/>
            <person name="Seipp A."/>
            <person name="Kuehnel H."/>
            <person name="Ruebsamen-Waigmann H."/>
        </authorList>
    </citation>
    <scope>NUCLEOTIDE SEQUENCE [GENOMIC DNA] OF 113-240</scope>
</reference>
<keyword id="KW-0014">AIDS</keyword>
<keyword id="KW-1032">Host cell membrane</keyword>
<keyword id="KW-1043">Host membrane</keyword>
<keyword id="KW-0945">Host-virus interaction</keyword>
<keyword id="KW-0449">Lipoprotein</keyword>
<keyword id="KW-0472">Membrane</keyword>
<keyword id="KW-0519">Myristate</keyword>
<keyword id="KW-0899">Viral immunoevasion</keyword>
<keyword id="KW-0843">Virulence</keyword>
<name>NEF_HV2D2</name>
<accession>P15829</accession>